<organism>
    <name type="scientific">Homo sapiens</name>
    <name type="common">Human</name>
    <dbReference type="NCBI Taxonomy" id="9606"/>
    <lineage>
        <taxon>Eukaryota</taxon>
        <taxon>Metazoa</taxon>
        <taxon>Chordata</taxon>
        <taxon>Craniata</taxon>
        <taxon>Vertebrata</taxon>
        <taxon>Euteleostomi</taxon>
        <taxon>Mammalia</taxon>
        <taxon>Eutheria</taxon>
        <taxon>Euarchontoglires</taxon>
        <taxon>Primates</taxon>
        <taxon>Haplorrhini</taxon>
        <taxon>Catarrhini</taxon>
        <taxon>Hominidae</taxon>
        <taxon>Homo</taxon>
    </lineage>
</organism>
<keyword id="KW-0010">Activator</keyword>
<keyword id="KW-0238">DNA-binding</keyword>
<keyword id="KW-1017">Isopeptide bond</keyword>
<keyword id="KW-0539">Nucleus</keyword>
<keyword id="KW-0597">Phosphoprotein</keyword>
<keyword id="KW-1267">Proteomics identification</keyword>
<keyword id="KW-1185">Reference proteome</keyword>
<keyword id="KW-0678">Repressor</keyword>
<keyword id="KW-0804">Transcription</keyword>
<keyword id="KW-0805">Transcription regulation</keyword>
<keyword id="KW-0832">Ubl conjugation</keyword>
<reference key="1">
    <citation type="journal article" date="1994" name="Genes Dev.">
        <title>Net, a new ets transcription factor that is activated by Ras.</title>
        <authorList>
            <person name="Giovane A."/>
            <person name="Pintzas A."/>
            <person name="Maira S.-M."/>
            <person name="Sobieszczuk P."/>
            <person name="Wasylyk B."/>
        </authorList>
    </citation>
    <scope>NUCLEOTIDE SEQUENCE [MRNA]</scope>
</reference>
<reference key="2">
    <citation type="journal article" date="1995" name="EMBO J.">
        <title>Comparative analysis of the ternary complex factors Elk-1, SAP-1a and SAP-2 (ERP/NET).</title>
        <authorList>
            <person name="Price M.A."/>
            <person name="Rogers A.E."/>
            <person name="Treisman R."/>
        </authorList>
    </citation>
    <scope>NUCLEOTIDE SEQUENCE [MRNA]</scope>
    <source>
        <tissue>Placenta</tissue>
    </source>
</reference>
<reference key="3">
    <citation type="submission" date="2004-06" db="EMBL/GenBank/DDBJ databases">
        <title>Cloning of human full open reading frames in Gateway(TM) system entry vector (pDONR201).</title>
        <authorList>
            <person name="Ebert L."/>
            <person name="Schick M."/>
            <person name="Neubert P."/>
            <person name="Schatten R."/>
            <person name="Henze S."/>
            <person name="Korn B."/>
        </authorList>
    </citation>
    <scope>NUCLEOTIDE SEQUENCE [LARGE SCALE MRNA]</scope>
</reference>
<reference key="4">
    <citation type="journal article" date="2004" name="Nat. Genet.">
        <title>Complete sequencing and characterization of 21,243 full-length human cDNAs.</title>
        <authorList>
            <person name="Ota T."/>
            <person name="Suzuki Y."/>
            <person name="Nishikawa T."/>
            <person name="Otsuki T."/>
            <person name="Sugiyama T."/>
            <person name="Irie R."/>
            <person name="Wakamatsu A."/>
            <person name="Hayashi K."/>
            <person name="Sato H."/>
            <person name="Nagai K."/>
            <person name="Kimura K."/>
            <person name="Makita H."/>
            <person name="Sekine M."/>
            <person name="Obayashi M."/>
            <person name="Nishi T."/>
            <person name="Shibahara T."/>
            <person name="Tanaka T."/>
            <person name="Ishii S."/>
            <person name="Yamamoto J."/>
            <person name="Saito K."/>
            <person name="Kawai Y."/>
            <person name="Isono Y."/>
            <person name="Nakamura Y."/>
            <person name="Nagahari K."/>
            <person name="Murakami K."/>
            <person name="Yasuda T."/>
            <person name="Iwayanagi T."/>
            <person name="Wagatsuma M."/>
            <person name="Shiratori A."/>
            <person name="Sudo H."/>
            <person name="Hosoiri T."/>
            <person name="Kaku Y."/>
            <person name="Kodaira H."/>
            <person name="Kondo H."/>
            <person name="Sugawara M."/>
            <person name="Takahashi M."/>
            <person name="Kanda K."/>
            <person name="Yokoi T."/>
            <person name="Furuya T."/>
            <person name="Kikkawa E."/>
            <person name="Omura Y."/>
            <person name="Abe K."/>
            <person name="Kamihara K."/>
            <person name="Katsuta N."/>
            <person name="Sato K."/>
            <person name="Tanikawa M."/>
            <person name="Yamazaki M."/>
            <person name="Ninomiya K."/>
            <person name="Ishibashi T."/>
            <person name="Yamashita H."/>
            <person name="Murakawa K."/>
            <person name="Fujimori K."/>
            <person name="Tanai H."/>
            <person name="Kimata M."/>
            <person name="Watanabe M."/>
            <person name="Hiraoka S."/>
            <person name="Chiba Y."/>
            <person name="Ishida S."/>
            <person name="Ono Y."/>
            <person name="Takiguchi S."/>
            <person name="Watanabe S."/>
            <person name="Yosida M."/>
            <person name="Hotuta T."/>
            <person name="Kusano J."/>
            <person name="Kanehori K."/>
            <person name="Takahashi-Fujii A."/>
            <person name="Hara H."/>
            <person name="Tanase T.-O."/>
            <person name="Nomura Y."/>
            <person name="Togiya S."/>
            <person name="Komai F."/>
            <person name="Hara R."/>
            <person name="Takeuchi K."/>
            <person name="Arita M."/>
            <person name="Imose N."/>
            <person name="Musashino K."/>
            <person name="Yuuki H."/>
            <person name="Oshima A."/>
            <person name="Sasaki N."/>
            <person name="Aotsuka S."/>
            <person name="Yoshikawa Y."/>
            <person name="Matsunawa H."/>
            <person name="Ichihara T."/>
            <person name="Shiohata N."/>
            <person name="Sano S."/>
            <person name="Moriya S."/>
            <person name="Momiyama H."/>
            <person name="Satoh N."/>
            <person name="Takami S."/>
            <person name="Terashima Y."/>
            <person name="Suzuki O."/>
            <person name="Nakagawa S."/>
            <person name="Senoh A."/>
            <person name="Mizoguchi H."/>
            <person name="Goto Y."/>
            <person name="Shimizu F."/>
            <person name="Wakebe H."/>
            <person name="Hishigaki H."/>
            <person name="Watanabe T."/>
            <person name="Sugiyama A."/>
            <person name="Takemoto M."/>
            <person name="Kawakami B."/>
            <person name="Yamazaki M."/>
            <person name="Watanabe K."/>
            <person name="Kumagai A."/>
            <person name="Itakura S."/>
            <person name="Fukuzumi Y."/>
            <person name="Fujimori Y."/>
            <person name="Komiyama M."/>
            <person name="Tashiro H."/>
            <person name="Tanigami A."/>
            <person name="Fujiwara T."/>
            <person name="Ono T."/>
            <person name="Yamada K."/>
            <person name="Fujii Y."/>
            <person name="Ozaki K."/>
            <person name="Hirao M."/>
            <person name="Ohmori Y."/>
            <person name="Kawabata A."/>
            <person name="Hikiji T."/>
            <person name="Kobatake N."/>
            <person name="Inagaki H."/>
            <person name="Ikema Y."/>
            <person name="Okamoto S."/>
            <person name="Okitani R."/>
            <person name="Kawakami T."/>
            <person name="Noguchi S."/>
            <person name="Itoh T."/>
            <person name="Shigeta K."/>
            <person name="Senba T."/>
            <person name="Matsumura K."/>
            <person name="Nakajima Y."/>
            <person name="Mizuno T."/>
            <person name="Morinaga M."/>
            <person name="Sasaki M."/>
            <person name="Togashi T."/>
            <person name="Oyama M."/>
            <person name="Hata H."/>
            <person name="Watanabe M."/>
            <person name="Komatsu T."/>
            <person name="Mizushima-Sugano J."/>
            <person name="Satoh T."/>
            <person name="Shirai Y."/>
            <person name="Takahashi Y."/>
            <person name="Nakagawa K."/>
            <person name="Okumura K."/>
            <person name="Nagase T."/>
            <person name="Nomura N."/>
            <person name="Kikuchi H."/>
            <person name="Masuho Y."/>
            <person name="Yamashita R."/>
            <person name="Nakai K."/>
            <person name="Yada T."/>
            <person name="Nakamura Y."/>
            <person name="Ohara O."/>
            <person name="Isogai T."/>
            <person name="Sugano S."/>
        </authorList>
    </citation>
    <scope>NUCLEOTIDE SEQUENCE [LARGE SCALE MRNA]</scope>
</reference>
<reference key="5">
    <citation type="submission" date="2005-07" db="EMBL/GenBank/DDBJ databases">
        <authorList>
            <person name="Mural R.J."/>
            <person name="Istrail S."/>
            <person name="Sutton G.G."/>
            <person name="Florea L."/>
            <person name="Halpern A.L."/>
            <person name="Mobarry C.M."/>
            <person name="Lippert R."/>
            <person name="Walenz B."/>
            <person name="Shatkay H."/>
            <person name="Dew I."/>
            <person name="Miller J.R."/>
            <person name="Flanigan M.J."/>
            <person name="Edwards N.J."/>
            <person name="Bolanos R."/>
            <person name="Fasulo D."/>
            <person name="Halldorsson B.V."/>
            <person name="Hannenhalli S."/>
            <person name="Turner R."/>
            <person name="Yooseph S."/>
            <person name="Lu F."/>
            <person name="Nusskern D.R."/>
            <person name="Shue B.C."/>
            <person name="Zheng X.H."/>
            <person name="Zhong F."/>
            <person name="Delcher A.L."/>
            <person name="Huson D.H."/>
            <person name="Kravitz S.A."/>
            <person name="Mouchard L."/>
            <person name="Reinert K."/>
            <person name="Remington K.A."/>
            <person name="Clark A.G."/>
            <person name="Waterman M.S."/>
            <person name="Eichler E.E."/>
            <person name="Adams M.D."/>
            <person name="Hunkapiller M.W."/>
            <person name="Myers E.W."/>
            <person name="Venter J.C."/>
        </authorList>
    </citation>
    <scope>NUCLEOTIDE SEQUENCE [LARGE SCALE GENOMIC DNA]</scope>
</reference>
<reference key="6">
    <citation type="journal article" date="2004" name="Genome Res.">
        <title>The status, quality, and expansion of the NIH full-length cDNA project: the Mammalian Gene Collection (MGC).</title>
        <authorList>
            <consortium name="The MGC Project Team"/>
        </authorList>
    </citation>
    <scope>NUCLEOTIDE SEQUENCE [LARGE SCALE MRNA]</scope>
    <source>
        <tissue>Brain</tissue>
    </source>
</reference>
<reference key="7">
    <citation type="journal article" date="2008" name="Mol. Cell">
        <title>Kinase-selective enrichment enables quantitative phosphoproteomics of the kinome across the cell cycle.</title>
        <authorList>
            <person name="Daub H."/>
            <person name="Olsen J.V."/>
            <person name="Bairlein M."/>
            <person name="Gnad F."/>
            <person name="Oppermann F.S."/>
            <person name="Korner R."/>
            <person name="Greff Z."/>
            <person name="Keri G."/>
            <person name="Stemmann O."/>
            <person name="Mann M."/>
        </authorList>
    </citation>
    <scope>PHOSPHORYLATION [LARGE SCALE ANALYSIS] AT SER-115</scope>
    <scope>IDENTIFICATION BY MASS SPECTROMETRY [LARGE SCALE ANALYSIS]</scope>
    <source>
        <tissue>Cervix carcinoma</tissue>
    </source>
</reference>
<reference key="8">
    <citation type="journal article" date="2013" name="J. Proteome Res.">
        <title>Toward a comprehensive characterization of a human cancer cell phosphoproteome.</title>
        <authorList>
            <person name="Zhou H."/>
            <person name="Di Palma S."/>
            <person name="Preisinger C."/>
            <person name="Peng M."/>
            <person name="Polat A.N."/>
            <person name="Heck A.J."/>
            <person name="Mohammed S."/>
        </authorList>
    </citation>
    <scope>PHOSPHORYLATION [LARGE SCALE ANALYSIS] AT SER-396</scope>
    <scope>IDENTIFICATION BY MASS SPECTROMETRY [LARGE SCALE ANALYSIS]</scope>
    <source>
        <tissue>Cervix carcinoma</tissue>
    </source>
</reference>
<reference key="9">
    <citation type="journal article" date="2017" name="Nat. Struct. Mol. Biol.">
        <title>Site-specific mapping of the human SUMO proteome reveals co-modification with phosphorylation.</title>
        <authorList>
            <person name="Hendriks I.A."/>
            <person name="Lyon D."/>
            <person name="Young C."/>
            <person name="Jensen L.J."/>
            <person name="Vertegaal A.C."/>
            <person name="Nielsen M.L."/>
        </authorList>
    </citation>
    <scope>SUMOYLATION [LARGE SCALE ANALYSIS] AT LYS-92 AND LYS-165</scope>
    <scope>IDENTIFICATION BY MASS SPECTROMETRY [LARGE SCALE ANALYSIS]</scope>
</reference>
<comment type="function">
    <text>May be a negative regulator of transcription, but can activate transcription when coexpressed with Ras, Src or Mos. Forms a ternary complex with the serum response factor and the ETS and SRF motifs of the Fos serum response element.</text>
</comment>
<comment type="subunit">
    <text>Interacts with CTBP1.</text>
</comment>
<comment type="interaction">
    <interactant intactId="EBI-1758534">
        <id>P41970</id>
    </interactant>
    <interactant intactId="EBI-953896">
        <id>Q9NP55</id>
        <label>BPIFA1</label>
    </interactant>
    <organismsDiffer>false</organismsDiffer>
    <experiments>3</experiments>
</comment>
<comment type="interaction">
    <interactant intactId="EBI-1758534">
        <id>P41970</id>
    </interactant>
    <interactant intactId="EBI-886">
        <id>P46108</id>
        <label>CRK</label>
    </interactant>
    <organismsDiffer>false</organismsDiffer>
    <experiments>4</experiments>
</comment>
<comment type="interaction">
    <interactant intactId="EBI-1758534">
        <id>P41970</id>
    </interactant>
    <interactant intactId="EBI-4314821">
        <id>Q13449</id>
        <label>LSAMP</label>
    </interactant>
    <organismsDiffer>false</organismsDiffer>
    <experiments>3</experiments>
</comment>
<comment type="interaction">
    <interactant intactId="EBI-1758534">
        <id>P41970</id>
    </interactant>
    <interactant intactId="EBI-389883">
        <id>P16333</id>
        <label>NCK1</label>
    </interactant>
    <organismsDiffer>false</organismsDiffer>
    <experiments>3</experiments>
</comment>
<comment type="interaction">
    <interactant intactId="EBI-1758534">
        <id>P41970</id>
    </interactant>
    <interactant intactId="EBI-2811583">
        <id>Q9BVL2</id>
        <label>NUP58</label>
    </interactant>
    <organismsDiffer>false</organismsDiffer>
    <experiments>3</experiments>
</comment>
<comment type="interaction">
    <interactant intactId="EBI-1758534">
        <id>P41970</id>
    </interactant>
    <interactant intactId="EBI-357275">
        <id>Q99471</id>
        <label>PFDN5</label>
    </interactant>
    <organismsDiffer>false</organismsDiffer>
    <experiments>3</experiments>
</comment>
<comment type="interaction">
    <interactant intactId="EBI-1758534">
        <id>P41970</id>
    </interactant>
    <interactant intactId="EBI-79464">
        <id>P27986</id>
        <label>PIK3R1</label>
    </interactant>
    <organismsDiffer>false</organismsDiffer>
    <experiments>2</experiments>
</comment>
<comment type="interaction">
    <interactant intactId="EBI-1758534">
        <id>P41970</id>
    </interactant>
    <interactant intactId="EBI-10198587">
        <id>Q02446</id>
        <label>SP4</label>
    </interactant>
    <organismsDiffer>false</organismsDiffer>
    <experiments>3</experiments>
</comment>
<comment type="subcellular location">
    <subcellularLocation>
        <location>Nucleus</location>
    </subcellularLocation>
</comment>
<comment type="similarity">
    <text evidence="3">Belongs to the ETS family.</text>
</comment>
<name>ELK3_HUMAN</name>
<accession>P41970</accession>
<accession>B2R6S6</accession>
<accession>Q6FG57</accession>
<accession>Q6GU29</accession>
<accession>Q9UD17</accession>
<proteinExistence type="evidence at protein level"/>
<dbReference type="EMBL" id="Z36715">
    <property type="protein sequence ID" value="CAA85309.1"/>
    <property type="molecule type" value="mRNA"/>
</dbReference>
<dbReference type="EMBL" id="CR542251">
    <property type="protein sequence ID" value="CAG47047.1"/>
    <property type="molecule type" value="mRNA"/>
</dbReference>
<dbReference type="EMBL" id="AK312694">
    <property type="protein sequence ID" value="BAG35573.1"/>
    <property type="molecule type" value="mRNA"/>
</dbReference>
<dbReference type="EMBL" id="CH471054">
    <property type="protein sequence ID" value="EAW97561.1"/>
    <property type="molecule type" value="Genomic_DNA"/>
</dbReference>
<dbReference type="EMBL" id="BC017371">
    <property type="protein sequence ID" value="AAH17371.1"/>
    <property type="molecule type" value="mRNA"/>
</dbReference>
<dbReference type="CCDS" id="CCDS9060.1"/>
<dbReference type="PIR" id="I38062">
    <property type="entry name" value="I38062"/>
</dbReference>
<dbReference type="RefSeq" id="NP_001400689.1">
    <property type="nucleotide sequence ID" value="NM_001413760.1"/>
</dbReference>
<dbReference type="RefSeq" id="NP_001400690.1">
    <property type="nucleotide sequence ID" value="NM_001413761.1"/>
</dbReference>
<dbReference type="RefSeq" id="NP_005221.2">
    <property type="nucleotide sequence ID" value="NM_005230.3"/>
</dbReference>
<dbReference type="RefSeq" id="XP_006719338.1">
    <property type="nucleotide sequence ID" value="XM_006719275.3"/>
</dbReference>
<dbReference type="SMR" id="P41970"/>
<dbReference type="BioGRID" id="108319">
    <property type="interactions" value="114"/>
</dbReference>
<dbReference type="CORUM" id="P41970"/>
<dbReference type="ELM" id="P41970"/>
<dbReference type="FunCoup" id="P41970">
    <property type="interactions" value="2296"/>
</dbReference>
<dbReference type="IntAct" id="P41970">
    <property type="interactions" value="113"/>
</dbReference>
<dbReference type="STRING" id="9606.ENSP00000228741"/>
<dbReference type="ChEMBL" id="CHEMBL1741184"/>
<dbReference type="GlyCosmos" id="P41970">
    <property type="glycosylation" value="6 sites, 2 glycans"/>
</dbReference>
<dbReference type="GlyGen" id="P41970">
    <property type="glycosylation" value="6 sites, 2 O-linked glycans (6 sites)"/>
</dbReference>
<dbReference type="iPTMnet" id="P41970"/>
<dbReference type="PhosphoSitePlus" id="P41970"/>
<dbReference type="BioMuta" id="ELK3"/>
<dbReference type="DMDM" id="116241349"/>
<dbReference type="jPOST" id="P41970"/>
<dbReference type="MassIVE" id="P41970"/>
<dbReference type="PaxDb" id="9606-ENSP00000228741"/>
<dbReference type="PeptideAtlas" id="P41970"/>
<dbReference type="ProteomicsDB" id="55479"/>
<dbReference type="Antibodypedia" id="898">
    <property type="antibodies" value="395 antibodies from 27 providers"/>
</dbReference>
<dbReference type="DNASU" id="2004"/>
<dbReference type="Ensembl" id="ENST00000228741.8">
    <property type="protein sequence ID" value="ENSP00000228741.3"/>
    <property type="gene ID" value="ENSG00000111145.8"/>
</dbReference>
<dbReference type="GeneID" id="2004"/>
<dbReference type="KEGG" id="hsa:2004"/>
<dbReference type="MANE-Select" id="ENST00000228741.8">
    <property type="protein sequence ID" value="ENSP00000228741.3"/>
    <property type="RefSeq nucleotide sequence ID" value="NM_005230.4"/>
    <property type="RefSeq protein sequence ID" value="NP_005221.2"/>
</dbReference>
<dbReference type="UCSC" id="uc001teo.2">
    <property type="organism name" value="human"/>
</dbReference>
<dbReference type="AGR" id="HGNC:3325"/>
<dbReference type="CTD" id="2004"/>
<dbReference type="DisGeNET" id="2004"/>
<dbReference type="GeneCards" id="ELK3"/>
<dbReference type="HGNC" id="HGNC:3325">
    <property type="gene designation" value="ELK3"/>
</dbReference>
<dbReference type="HPA" id="ENSG00000111145">
    <property type="expression patterns" value="Low tissue specificity"/>
</dbReference>
<dbReference type="MIM" id="600247">
    <property type="type" value="gene"/>
</dbReference>
<dbReference type="neXtProt" id="NX_P41970"/>
<dbReference type="OpenTargets" id="ENSG00000111145"/>
<dbReference type="PharmGKB" id="PA27752"/>
<dbReference type="VEuPathDB" id="HostDB:ENSG00000111145"/>
<dbReference type="eggNOG" id="KOG3806">
    <property type="taxonomic scope" value="Eukaryota"/>
</dbReference>
<dbReference type="GeneTree" id="ENSGT00940000157129"/>
<dbReference type="HOGENOM" id="CLU_036905_1_0_1"/>
<dbReference type="InParanoid" id="P41970"/>
<dbReference type="OMA" id="DSDCKMA"/>
<dbReference type="OrthoDB" id="8898988at2759"/>
<dbReference type="PAN-GO" id="P41970">
    <property type="GO annotations" value="4 GO annotations based on evolutionary models"/>
</dbReference>
<dbReference type="PhylomeDB" id="P41970"/>
<dbReference type="TreeFam" id="TF317732"/>
<dbReference type="PathwayCommons" id="P41970"/>
<dbReference type="SignaLink" id="P41970"/>
<dbReference type="SIGNOR" id="P41970"/>
<dbReference type="BioGRID-ORCS" id="2004">
    <property type="hits" value="12 hits in 1180 CRISPR screens"/>
</dbReference>
<dbReference type="ChiTaRS" id="ELK3">
    <property type="organism name" value="human"/>
</dbReference>
<dbReference type="GeneWiki" id="ELK3"/>
<dbReference type="GenomeRNAi" id="2004"/>
<dbReference type="Pharos" id="P41970">
    <property type="development level" value="Tbio"/>
</dbReference>
<dbReference type="PRO" id="PR:P41970"/>
<dbReference type="Proteomes" id="UP000005640">
    <property type="component" value="Chromosome 12"/>
</dbReference>
<dbReference type="RNAct" id="P41970">
    <property type="molecule type" value="protein"/>
</dbReference>
<dbReference type="Bgee" id="ENSG00000111145">
    <property type="expression patterns" value="Expressed in bronchial epithelial cell and 203 other cell types or tissues"/>
</dbReference>
<dbReference type="ExpressionAtlas" id="P41970">
    <property type="expression patterns" value="baseline and differential"/>
</dbReference>
<dbReference type="GO" id="GO:0000785">
    <property type="term" value="C:chromatin"/>
    <property type="evidence" value="ECO:0000247"/>
    <property type="project" value="NTNU_SB"/>
</dbReference>
<dbReference type="GO" id="GO:0005739">
    <property type="term" value="C:mitochondrion"/>
    <property type="evidence" value="ECO:0000314"/>
    <property type="project" value="HPA"/>
</dbReference>
<dbReference type="GO" id="GO:0005654">
    <property type="term" value="C:nucleoplasm"/>
    <property type="evidence" value="ECO:0000314"/>
    <property type="project" value="HPA"/>
</dbReference>
<dbReference type="GO" id="GO:0005634">
    <property type="term" value="C:nucleus"/>
    <property type="evidence" value="ECO:0000314"/>
    <property type="project" value="HGNC-UCL"/>
</dbReference>
<dbReference type="GO" id="GO:0001228">
    <property type="term" value="F:DNA-binding transcription activator activity, RNA polymerase II-specific"/>
    <property type="evidence" value="ECO:0000314"/>
    <property type="project" value="NTNU_SB"/>
</dbReference>
<dbReference type="GO" id="GO:0003700">
    <property type="term" value="F:DNA-binding transcription factor activity"/>
    <property type="evidence" value="ECO:0000303"/>
    <property type="project" value="ProtInc"/>
</dbReference>
<dbReference type="GO" id="GO:0000981">
    <property type="term" value="F:DNA-binding transcription factor activity, RNA polymerase II-specific"/>
    <property type="evidence" value="ECO:0000247"/>
    <property type="project" value="NTNU_SB"/>
</dbReference>
<dbReference type="GO" id="GO:0001227">
    <property type="term" value="F:DNA-binding transcription repressor activity, RNA polymerase II-specific"/>
    <property type="evidence" value="ECO:0000314"/>
    <property type="project" value="HGNC-UCL"/>
</dbReference>
<dbReference type="GO" id="GO:0032422">
    <property type="term" value="F:purine-rich negative regulatory element binding"/>
    <property type="evidence" value="ECO:0000314"/>
    <property type="project" value="HGNC-UCL"/>
</dbReference>
<dbReference type="GO" id="GO:0000978">
    <property type="term" value="F:RNA polymerase II cis-regulatory region sequence-specific DNA binding"/>
    <property type="evidence" value="ECO:0000314"/>
    <property type="project" value="NTNU_SB"/>
</dbReference>
<dbReference type="GO" id="GO:1990837">
    <property type="term" value="F:sequence-specific double-stranded DNA binding"/>
    <property type="evidence" value="ECO:0000314"/>
    <property type="project" value="ARUK-UCL"/>
</dbReference>
<dbReference type="GO" id="GO:0001525">
    <property type="term" value="P:angiogenesis"/>
    <property type="evidence" value="ECO:0007669"/>
    <property type="project" value="Ensembl"/>
</dbReference>
<dbReference type="GO" id="GO:0030154">
    <property type="term" value="P:cell differentiation"/>
    <property type="evidence" value="ECO:0000318"/>
    <property type="project" value="GO_Central"/>
</dbReference>
<dbReference type="GO" id="GO:0000122">
    <property type="term" value="P:negative regulation of transcription by RNA polymerase II"/>
    <property type="evidence" value="ECO:0000314"/>
    <property type="project" value="HGNC-UCL"/>
</dbReference>
<dbReference type="GO" id="GO:0045944">
    <property type="term" value="P:positive regulation of transcription by RNA polymerase II"/>
    <property type="evidence" value="ECO:0000314"/>
    <property type="project" value="NTNU_SB"/>
</dbReference>
<dbReference type="GO" id="GO:0006357">
    <property type="term" value="P:regulation of transcription by RNA polymerase II"/>
    <property type="evidence" value="ECO:0000318"/>
    <property type="project" value="GO_Central"/>
</dbReference>
<dbReference type="GO" id="GO:0007165">
    <property type="term" value="P:signal transduction"/>
    <property type="evidence" value="ECO:0000304"/>
    <property type="project" value="ProtInc"/>
</dbReference>
<dbReference type="GO" id="GO:0042060">
    <property type="term" value="P:wound healing"/>
    <property type="evidence" value="ECO:0007669"/>
    <property type="project" value="Ensembl"/>
</dbReference>
<dbReference type="FunFam" id="1.10.10.10:FF:000113">
    <property type="entry name" value="ETS domain-containing protein Elk-3"/>
    <property type="match status" value="1"/>
</dbReference>
<dbReference type="Gene3D" id="1.10.10.10">
    <property type="entry name" value="Winged helix-like DNA-binding domain superfamily/Winged helix DNA-binding domain"/>
    <property type="match status" value="1"/>
</dbReference>
<dbReference type="InterPro" id="IPR000418">
    <property type="entry name" value="Ets_dom"/>
</dbReference>
<dbReference type="InterPro" id="IPR046328">
    <property type="entry name" value="ETS_fam"/>
</dbReference>
<dbReference type="InterPro" id="IPR036388">
    <property type="entry name" value="WH-like_DNA-bd_sf"/>
</dbReference>
<dbReference type="InterPro" id="IPR036390">
    <property type="entry name" value="WH_DNA-bd_sf"/>
</dbReference>
<dbReference type="PANTHER" id="PTHR11849">
    <property type="entry name" value="ETS"/>
    <property type="match status" value="1"/>
</dbReference>
<dbReference type="PANTHER" id="PTHR11849:SF172">
    <property type="entry name" value="ETS DOMAIN-CONTAINING PROTEIN ELK-3"/>
    <property type="match status" value="1"/>
</dbReference>
<dbReference type="Pfam" id="PF00178">
    <property type="entry name" value="Ets"/>
    <property type="match status" value="1"/>
</dbReference>
<dbReference type="PRINTS" id="PR00454">
    <property type="entry name" value="ETSDOMAIN"/>
</dbReference>
<dbReference type="SMART" id="SM00413">
    <property type="entry name" value="ETS"/>
    <property type="match status" value="1"/>
</dbReference>
<dbReference type="SUPFAM" id="SSF46785">
    <property type="entry name" value="Winged helix' DNA-binding domain"/>
    <property type="match status" value="1"/>
</dbReference>
<dbReference type="PROSITE" id="PS00345">
    <property type="entry name" value="ETS_DOMAIN_1"/>
    <property type="match status" value="1"/>
</dbReference>
<dbReference type="PROSITE" id="PS00346">
    <property type="entry name" value="ETS_DOMAIN_2"/>
    <property type="match status" value="1"/>
</dbReference>
<dbReference type="PROSITE" id="PS50061">
    <property type="entry name" value="ETS_DOMAIN_3"/>
    <property type="match status" value="1"/>
</dbReference>
<protein>
    <recommendedName>
        <fullName>ETS domain-containing protein Elk-3</fullName>
    </recommendedName>
    <alternativeName>
        <fullName>ETS-related protein ERP</fullName>
    </alternativeName>
    <alternativeName>
        <fullName>ETS-related protein NET</fullName>
    </alternativeName>
    <alternativeName>
        <fullName>Serum response factor accessory protein 2</fullName>
        <shortName>SAP-2</shortName>
        <shortName>SRF accessory protein 2</shortName>
    </alternativeName>
</protein>
<sequence>MESAITLWQFLLQLLLDQKHEHLICWTSNDGEFKLLKAEEVAKLWGLRKNKTNMNYDKLSRALRYYYDKNIIKKVIGQKFVYKFVSFPEILKMDPHAVEISRESLLLQDSDCKASPEGREAHKHGLAALRSTSRNEYIHSGLYSSFTINSLQNPPDAFKAIKTEKLEEPPEDSPPVEEVRTVIRFVTNKTDKHVTRPVVSLPSTSEAAAASAFLASSVSAKISSLMLPNAASISSASPFSSRSPSLSPNSPLPSEHRSLFLEAACHDSDSLEPLNLSSGSKTKSPSLPPKAKKPKGLEISAPPLVLSGTDIGSIALNSPALPSGSLTPAFFTAQTPNGLLLTPSPLLSSIHFWSSLSPVAPLSPARLQGPSTLFQFPTLLNGHMPVPIPSLDRAASPVLLSSNSQKS</sequence>
<gene>
    <name type="primary">ELK3</name>
    <name type="synonym">NET</name>
    <name type="synonym">SAP2</name>
</gene>
<evidence type="ECO:0000255" key="1">
    <source>
        <dbReference type="PROSITE-ProRule" id="PRU00237"/>
    </source>
</evidence>
<evidence type="ECO:0000256" key="2">
    <source>
        <dbReference type="SAM" id="MobiDB-lite"/>
    </source>
</evidence>
<evidence type="ECO:0000305" key="3"/>
<evidence type="ECO:0007744" key="4">
    <source>
    </source>
</evidence>
<evidence type="ECO:0007744" key="5">
    <source>
    </source>
</evidence>
<evidence type="ECO:0007744" key="6">
    <source>
    </source>
</evidence>
<feature type="chain" id="PRO_0000204097" description="ETS domain-containing protein Elk-3">
    <location>
        <begin position="1"/>
        <end position="407"/>
    </location>
</feature>
<feature type="DNA-binding region" description="ETS" evidence="1">
    <location>
        <begin position="5"/>
        <end position="85"/>
    </location>
</feature>
<feature type="region of interest" description="Disordered" evidence="2">
    <location>
        <begin position="234"/>
        <end position="253"/>
    </location>
</feature>
<feature type="region of interest" description="Disordered" evidence="2">
    <location>
        <begin position="271"/>
        <end position="298"/>
    </location>
</feature>
<feature type="short sequence motif" description="CTBP-binding motif">
    <location>
        <begin position="273"/>
        <end position="277"/>
    </location>
</feature>
<feature type="modified residue" description="Phosphoserine" evidence="4">
    <location>
        <position position="115"/>
    </location>
</feature>
<feature type="modified residue" description="Phosphoserine" evidence="5">
    <location>
        <position position="396"/>
    </location>
</feature>
<feature type="cross-link" description="Glycyl lysine isopeptide (Lys-Gly) (interchain with G-Cter in SUMO2)" evidence="6">
    <location>
        <position position="92"/>
    </location>
</feature>
<feature type="cross-link" description="Glycyl lysine isopeptide (Lys-Gly) (interchain with G-Cter in SUMO2)" evidence="6">
    <location>
        <position position="165"/>
    </location>
</feature>
<feature type="sequence variant" id="VAR_048946" description="In dbSNP:rs35332676.">
    <original>P</original>
    <variation>L</variation>
    <location>
        <position position="169"/>
    </location>
</feature>
<feature type="sequence conflict" description="In Ref. 1; CAA85309." evidence="3" ref="1">
    <original>A</original>
    <variation>V</variation>
    <location>
        <position position="114"/>
    </location>
</feature>
<feature type="sequence conflict" description="In Ref. 3; CAG47047." evidence="3" ref="3">
    <original>E</original>
    <variation>G</variation>
    <location>
        <position position="117"/>
    </location>
</feature>
<feature type="sequence conflict" description="In Ref. 1; CAA85309." evidence="3" ref="1">
    <original>A</original>
    <variation>V</variation>
    <location>
        <position position="128"/>
    </location>
</feature>
<feature type="sequence conflict" description="In Ref. 1; CAA85309." evidence="3" ref="1">
    <original>Q</original>
    <variation>E</variation>
    <location>
        <position position="152"/>
    </location>
</feature>
<feature type="sequence conflict" description="In Ref. 1; CAA85309." evidence="3" ref="1">
    <original>T</original>
    <variation>R</variation>
    <location>
        <position position="163"/>
    </location>
</feature>
<feature type="sequence conflict" description="In Ref. 1; CAA85309." evidence="3" ref="1">
    <original>N</original>
    <variation>K</variation>
    <location>
        <position position="249"/>
    </location>
</feature>